<dbReference type="EC" id="3.5.4.13" evidence="1"/>
<dbReference type="EMBL" id="AE002160">
    <property type="protein sequence ID" value="AAF39174.1"/>
    <property type="molecule type" value="Genomic_DNA"/>
</dbReference>
<dbReference type="PIR" id="D81717">
    <property type="entry name" value="D81717"/>
</dbReference>
<dbReference type="RefSeq" id="WP_010230114.1">
    <property type="nucleotide sequence ID" value="NZ_CP063055.1"/>
</dbReference>
<dbReference type="SMR" id="Q9PKZ9"/>
<dbReference type="GeneID" id="1246352"/>
<dbReference type="KEGG" id="cmu:TC_0309"/>
<dbReference type="eggNOG" id="COG0717">
    <property type="taxonomic scope" value="Bacteria"/>
</dbReference>
<dbReference type="HOGENOM" id="CLU_087476_4_0_0"/>
<dbReference type="OrthoDB" id="9780202at2"/>
<dbReference type="UniPathway" id="UPA00610">
    <property type="reaction ID" value="UER00665"/>
</dbReference>
<dbReference type="Proteomes" id="UP000000800">
    <property type="component" value="Chromosome"/>
</dbReference>
<dbReference type="GO" id="GO:0008829">
    <property type="term" value="F:dCTP deaminase activity"/>
    <property type="evidence" value="ECO:0007669"/>
    <property type="project" value="UniProtKB-UniRule"/>
</dbReference>
<dbReference type="GO" id="GO:0000166">
    <property type="term" value="F:nucleotide binding"/>
    <property type="evidence" value="ECO:0007669"/>
    <property type="project" value="UniProtKB-KW"/>
</dbReference>
<dbReference type="GO" id="GO:0006226">
    <property type="term" value="P:dUMP biosynthetic process"/>
    <property type="evidence" value="ECO:0007669"/>
    <property type="project" value="UniProtKB-UniPathway"/>
</dbReference>
<dbReference type="GO" id="GO:0006229">
    <property type="term" value="P:dUTP biosynthetic process"/>
    <property type="evidence" value="ECO:0007669"/>
    <property type="project" value="UniProtKB-UniRule"/>
</dbReference>
<dbReference type="GO" id="GO:0015949">
    <property type="term" value="P:nucleobase-containing small molecule interconversion"/>
    <property type="evidence" value="ECO:0007669"/>
    <property type="project" value="TreeGrafter"/>
</dbReference>
<dbReference type="CDD" id="cd07557">
    <property type="entry name" value="trimeric_dUTPase"/>
    <property type="match status" value="1"/>
</dbReference>
<dbReference type="FunFam" id="2.70.40.10:FF:000001">
    <property type="entry name" value="dCTP deaminase"/>
    <property type="match status" value="1"/>
</dbReference>
<dbReference type="Gene3D" id="2.70.40.10">
    <property type="match status" value="1"/>
</dbReference>
<dbReference type="HAMAP" id="MF_00146">
    <property type="entry name" value="dCTP_deaminase"/>
    <property type="match status" value="1"/>
</dbReference>
<dbReference type="InterPro" id="IPR011962">
    <property type="entry name" value="dCTP_deaminase"/>
</dbReference>
<dbReference type="InterPro" id="IPR036157">
    <property type="entry name" value="dUTPase-like_sf"/>
</dbReference>
<dbReference type="InterPro" id="IPR033704">
    <property type="entry name" value="dUTPase_trimeric"/>
</dbReference>
<dbReference type="NCBIfam" id="TIGR02274">
    <property type="entry name" value="dCTP_deam"/>
    <property type="match status" value="1"/>
</dbReference>
<dbReference type="PANTHER" id="PTHR42680">
    <property type="entry name" value="DCTP DEAMINASE"/>
    <property type="match status" value="1"/>
</dbReference>
<dbReference type="PANTHER" id="PTHR42680:SF3">
    <property type="entry name" value="DCTP DEAMINASE"/>
    <property type="match status" value="1"/>
</dbReference>
<dbReference type="Pfam" id="PF22769">
    <property type="entry name" value="DCD"/>
    <property type="match status" value="1"/>
</dbReference>
<dbReference type="SUPFAM" id="SSF51283">
    <property type="entry name" value="dUTPase-like"/>
    <property type="match status" value="1"/>
</dbReference>
<protein>
    <recommendedName>
        <fullName evidence="1">dCTP deaminase</fullName>
        <ecNumber evidence="1">3.5.4.13</ecNumber>
    </recommendedName>
    <alternativeName>
        <fullName evidence="1">Deoxycytidine triphosphate deaminase</fullName>
    </alternativeName>
</protein>
<keyword id="KW-0378">Hydrolase</keyword>
<keyword id="KW-0546">Nucleotide metabolism</keyword>
<keyword id="KW-0547">Nucleotide-binding</keyword>
<evidence type="ECO:0000255" key="1">
    <source>
        <dbReference type="HAMAP-Rule" id="MF_00146"/>
    </source>
</evidence>
<gene>
    <name evidence="1" type="primary">dcd</name>
    <name type="ordered locus">TC_0309</name>
</gene>
<feature type="chain" id="PRO_0000155975" description="dCTP deaminase">
    <location>
        <begin position="1"/>
        <end position="190"/>
    </location>
</feature>
<feature type="active site" description="Proton donor/acceptor" evidence="1">
    <location>
        <position position="139"/>
    </location>
</feature>
<feature type="binding site" evidence="1">
    <location>
        <begin position="113"/>
        <end position="118"/>
    </location>
    <ligand>
        <name>dCTP</name>
        <dbReference type="ChEBI" id="CHEBI:61481"/>
    </ligand>
</feature>
<feature type="binding site" evidence="1">
    <location>
        <position position="158"/>
    </location>
    <ligand>
        <name>dCTP</name>
        <dbReference type="ChEBI" id="CHEBI:61481"/>
    </ligand>
</feature>
<feature type="binding site" evidence="1">
    <location>
        <position position="172"/>
    </location>
    <ligand>
        <name>dCTP</name>
        <dbReference type="ChEBI" id="CHEBI:61481"/>
    </ligand>
</feature>
<feature type="binding site" evidence="1">
    <location>
        <position position="181"/>
    </location>
    <ligand>
        <name>dCTP</name>
        <dbReference type="ChEBI" id="CHEBI:61481"/>
    </ligand>
</feature>
<feature type="binding site" evidence="1">
    <location>
        <position position="182"/>
    </location>
    <ligand>
        <name>dCTP</name>
        <dbReference type="ChEBI" id="CHEBI:61481"/>
    </ligand>
</feature>
<reference key="1">
    <citation type="journal article" date="2000" name="Nucleic Acids Res.">
        <title>Genome sequences of Chlamydia trachomatis MoPn and Chlamydia pneumoniae AR39.</title>
        <authorList>
            <person name="Read T.D."/>
            <person name="Brunham R.C."/>
            <person name="Shen C."/>
            <person name="Gill S.R."/>
            <person name="Heidelberg J.F."/>
            <person name="White O."/>
            <person name="Hickey E.K."/>
            <person name="Peterson J.D."/>
            <person name="Utterback T.R."/>
            <person name="Berry K.J."/>
            <person name="Bass S."/>
            <person name="Linher K.D."/>
            <person name="Weidman J.F."/>
            <person name="Khouri H.M."/>
            <person name="Craven B."/>
            <person name="Bowman C."/>
            <person name="Dodson R.J."/>
            <person name="Gwinn M.L."/>
            <person name="Nelson W.C."/>
            <person name="DeBoy R.T."/>
            <person name="Kolonay J.F."/>
            <person name="McClarty G."/>
            <person name="Salzberg S.L."/>
            <person name="Eisen J.A."/>
            <person name="Fraser C.M."/>
        </authorList>
    </citation>
    <scope>NUCLEOTIDE SEQUENCE [LARGE SCALE GENOMIC DNA]</scope>
    <source>
        <strain>MoPn / Nigg</strain>
    </source>
</reference>
<name>DCD_CHLMU</name>
<proteinExistence type="inferred from homology"/>
<sequence>MGIKEDNWIRKMAIEEGMIEPFADNQVKVHPETGEKLISYGLSSYGYDLRISREFKVFTNIYNSLVDPKCFTEDALISIVDDVCIIPPNSFALARSVEYFRIPRNVLTVCIGKSTYARCGLIVNVTPFEPEWEGYVTIEISNTTPLPAKIYANEGIAQVLFFEGDSACDVSYADRQGKYQKQQGITVPFV</sequence>
<organism>
    <name type="scientific">Chlamydia muridarum (strain MoPn / Nigg)</name>
    <dbReference type="NCBI Taxonomy" id="243161"/>
    <lineage>
        <taxon>Bacteria</taxon>
        <taxon>Pseudomonadati</taxon>
        <taxon>Chlamydiota</taxon>
        <taxon>Chlamydiia</taxon>
        <taxon>Chlamydiales</taxon>
        <taxon>Chlamydiaceae</taxon>
        <taxon>Chlamydia/Chlamydophila group</taxon>
        <taxon>Chlamydia</taxon>
    </lineage>
</organism>
<accession>Q9PKZ9</accession>
<comment type="function">
    <text evidence="1">Catalyzes the deamination of dCTP to dUTP.</text>
</comment>
<comment type="catalytic activity">
    <reaction evidence="1">
        <text>dCTP + H2O + H(+) = dUTP + NH4(+)</text>
        <dbReference type="Rhea" id="RHEA:22680"/>
        <dbReference type="ChEBI" id="CHEBI:15377"/>
        <dbReference type="ChEBI" id="CHEBI:15378"/>
        <dbReference type="ChEBI" id="CHEBI:28938"/>
        <dbReference type="ChEBI" id="CHEBI:61481"/>
        <dbReference type="ChEBI" id="CHEBI:61555"/>
        <dbReference type="EC" id="3.5.4.13"/>
    </reaction>
</comment>
<comment type="pathway">
    <text evidence="1">Pyrimidine metabolism; dUMP biosynthesis; dUMP from dCTP (dUTP route): step 1/2.</text>
</comment>
<comment type="subunit">
    <text evidence="1">Homotrimer.</text>
</comment>
<comment type="similarity">
    <text evidence="1">Belongs to the dCTP deaminase family.</text>
</comment>